<proteinExistence type="evidence at protein level"/>
<feature type="chain" id="PRO_0000102494" description="Endoribonuclease YbeY">
    <location>
        <begin position="1"/>
        <end position="177"/>
    </location>
</feature>
<feature type="binding site" evidence="1">
    <location>
        <position position="118"/>
    </location>
    <ligand>
        <name>Zn(2+)</name>
        <dbReference type="ChEBI" id="CHEBI:29105"/>
        <note>catalytic</note>
    </ligand>
</feature>
<feature type="binding site" evidence="1">
    <location>
        <position position="122"/>
    </location>
    <ligand>
        <name>Zn(2+)</name>
        <dbReference type="ChEBI" id="CHEBI:29105"/>
        <note>catalytic</note>
    </ligand>
</feature>
<feature type="binding site" evidence="1">
    <location>
        <position position="128"/>
    </location>
    <ligand>
        <name>Zn(2+)</name>
        <dbReference type="ChEBI" id="CHEBI:29105"/>
        <note>catalytic</note>
    </ligand>
</feature>
<organism>
    <name type="scientific">Mycobacterium tuberculosis (strain ATCC 25618 / H37Rv)</name>
    <dbReference type="NCBI Taxonomy" id="83332"/>
    <lineage>
        <taxon>Bacteria</taxon>
        <taxon>Bacillati</taxon>
        <taxon>Actinomycetota</taxon>
        <taxon>Actinomycetes</taxon>
        <taxon>Mycobacteriales</taxon>
        <taxon>Mycobacteriaceae</taxon>
        <taxon>Mycobacterium</taxon>
        <taxon>Mycobacterium tuberculosis complex</taxon>
    </lineage>
</organism>
<protein>
    <recommendedName>
        <fullName evidence="1">Endoribonuclease YbeY</fullName>
        <ecNumber evidence="1">3.1.-.-</ecNumber>
    </recommendedName>
</protein>
<sequence>MSIEVANESGIDVSEAELVSVARFVIAKMDVNPCAELSMLLLDTAAMADLHMRWMDLPGPTDVMSFPMDELEPGGRPDAPEPGPSMLGDIVLCPEFAAEQAAAAGHSLGHELALLTIHGVLHLLGYDHAEPDEEKEMFALQDRLLEEWVADQVEAYQHDRQDEKDRRLLDKSRYFDL</sequence>
<gene>
    <name evidence="1" type="primary">ybeY</name>
    <name type="ordered locus">Rv2367c</name>
    <name type="ORF">MTCY27.13</name>
</gene>
<evidence type="ECO:0000255" key="1">
    <source>
        <dbReference type="HAMAP-Rule" id="MF_00009"/>
    </source>
</evidence>
<evidence type="ECO:0000305" key="2"/>
<comment type="function">
    <text evidence="1">Single strand-specific metallo-endoribonuclease involved in late-stage 70S ribosome quality control and in maturation of the 3' terminus of the 16S rRNA.</text>
</comment>
<comment type="cofactor">
    <cofactor evidence="1">
        <name>Zn(2+)</name>
        <dbReference type="ChEBI" id="CHEBI:29105"/>
    </cofactor>
    <text evidence="1">Binds 1 zinc ion.</text>
</comment>
<comment type="subcellular location">
    <subcellularLocation>
        <location evidence="1">Cytoplasm</location>
    </subcellularLocation>
</comment>
<comment type="similarity">
    <text evidence="1">Belongs to the endoribonuclease YbeY family.</text>
</comment>
<comment type="sequence caution" evidence="2">
    <conflict type="erroneous initiation">
        <sequence resource="EMBL-CDS" id="CCP45155"/>
    </conflict>
    <text>Extended N-terminus.</text>
</comment>
<accession>P9WGX9</accession>
<accession>L0T9L5</accession>
<accession>O05831</accession>
<accession>P67134</accession>
<dbReference type="EC" id="3.1.-.-" evidence="1"/>
<dbReference type="EMBL" id="AL123456">
    <property type="protein sequence ID" value="CCP45155.1"/>
    <property type="status" value="ALT_INIT"/>
    <property type="molecule type" value="Genomic_DNA"/>
</dbReference>
<dbReference type="PIR" id="F70586">
    <property type="entry name" value="F70586"/>
</dbReference>
<dbReference type="RefSeq" id="NP_216883.1">
    <property type="nucleotide sequence ID" value="NC_000962.3"/>
</dbReference>
<dbReference type="RefSeq" id="WP_003899292.1">
    <property type="nucleotide sequence ID" value="NZ_NVQJ01000029.1"/>
</dbReference>
<dbReference type="RefSeq" id="WP_003902256.1">
    <property type="nucleotide sequence ID" value="NC_000962.3"/>
</dbReference>
<dbReference type="SMR" id="P9WGX9"/>
<dbReference type="FunCoup" id="P9WGX9">
    <property type="interactions" value="72"/>
</dbReference>
<dbReference type="STRING" id="83332.Rv2367c"/>
<dbReference type="PaxDb" id="83332-Rv2367c"/>
<dbReference type="DNASU" id="885989"/>
<dbReference type="GeneID" id="885989"/>
<dbReference type="KEGG" id="mtu:Rv2367c"/>
<dbReference type="PATRIC" id="fig|83332.12.peg.2646"/>
<dbReference type="TubercuList" id="Rv2367c"/>
<dbReference type="eggNOG" id="COG0319">
    <property type="taxonomic scope" value="Bacteria"/>
</dbReference>
<dbReference type="InParanoid" id="P9WGX9"/>
<dbReference type="OrthoDB" id="9807740at2"/>
<dbReference type="Proteomes" id="UP000001584">
    <property type="component" value="Chromosome"/>
</dbReference>
<dbReference type="GO" id="GO:0005737">
    <property type="term" value="C:cytoplasm"/>
    <property type="evidence" value="ECO:0007669"/>
    <property type="project" value="UniProtKB-SubCell"/>
</dbReference>
<dbReference type="GO" id="GO:0004222">
    <property type="term" value="F:metalloendopeptidase activity"/>
    <property type="evidence" value="ECO:0007669"/>
    <property type="project" value="InterPro"/>
</dbReference>
<dbReference type="GO" id="GO:0004521">
    <property type="term" value="F:RNA endonuclease activity"/>
    <property type="evidence" value="ECO:0007669"/>
    <property type="project" value="UniProtKB-UniRule"/>
</dbReference>
<dbReference type="GO" id="GO:0008270">
    <property type="term" value="F:zinc ion binding"/>
    <property type="evidence" value="ECO:0007669"/>
    <property type="project" value="UniProtKB-UniRule"/>
</dbReference>
<dbReference type="GO" id="GO:0006364">
    <property type="term" value="P:rRNA processing"/>
    <property type="evidence" value="ECO:0007669"/>
    <property type="project" value="UniProtKB-UniRule"/>
</dbReference>
<dbReference type="Gene3D" id="3.40.390.30">
    <property type="entry name" value="Metalloproteases ('zincins'), catalytic domain"/>
    <property type="match status" value="1"/>
</dbReference>
<dbReference type="HAMAP" id="MF_00009">
    <property type="entry name" value="Endoribonucl_YbeY"/>
    <property type="match status" value="1"/>
</dbReference>
<dbReference type="InterPro" id="IPR023091">
    <property type="entry name" value="MetalPrtase_cat_dom_sf_prd"/>
</dbReference>
<dbReference type="InterPro" id="IPR002036">
    <property type="entry name" value="YbeY"/>
</dbReference>
<dbReference type="InterPro" id="IPR020549">
    <property type="entry name" value="YbeY_CS"/>
</dbReference>
<dbReference type="NCBIfam" id="TIGR00043">
    <property type="entry name" value="rRNA maturation RNase YbeY"/>
    <property type="match status" value="1"/>
</dbReference>
<dbReference type="PANTHER" id="PTHR46986">
    <property type="entry name" value="ENDORIBONUCLEASE YBEY, CHLOROPLASTIC"/>
    <property type="match status" value="1"/>
</dbReference>
<dbReference type="PANTHER" id="PTHR46986:SF1">
    <property type="entry name" value="ENDORIBONUCLEASE YBEY, CHLOROPLASTIC"/>
    <property type="match status" value="1"/>
</dbReference>
<dbReference type="Pfam" id="PF02130">
    <property type="entry name" value="YbeY"/>
    <property type="match status" value="1"/>
</dbReference>
<dbReference type="SUPFAM" id="SSF55486">
    <property type="entry name" value="Metalloproteases ('zincins'), catalytic domain"/>
    <property type="match status" value="1"/>
</dbReference>
<dbReference type="PROSITE" id="PS01306">
    <property type="entry name" value="UPF0054"/>
    <property type="match status" value="1"/>
</dbReference>
<reference key="1">
    <citation type="journal article" date="1998" name="Nature">
        <title>Deciphering the biology of Mycobacterium tuberculosis from the complete genome sequence.</title>
        <authorList>
            <person name="Cole S.T."/>
            <person name="Brosch R."/>
            <person name="Parkhill J."/>
            <person name="Garnier T."/>
            <person name="Churcher C.M."/>
            <person name="Harris D.E."/>
            <person name="Gordon S.V."/>
            <person name="Eiglmeier K."/>
            <person name="Gas S."/>
            <person name="Barry C.E. III"/>
            <person name="Tekaia F."/>
            <person name="Badcock K."/>
            <person name="Basham D."/>
            <person name="Brown D."/>
            <person name="Chillingworth T."/>
            <person name="Connor R."/>
            <person name="Davies R.M."/>
            <person name="Devlin K."/>
            <person name="Feltwell T."/>
            <person name="Gentles S."/>
            <person name="Hamlin N."/>
            <person name="Holroyd S."/>
            <person name="Hornsby T."/>
            <person name="Jagels K."/>
            <person name="Krogh A."/>
            <person name="McLean J."/>
            <person name="Moule S."/>
            <person name="Murphy L.D."/>
            <person name="Oliver S."/>
            <person name="Osborne J."/>
            <person name="Quail M.A."/>
            <person name="Rajandream M.A."/>
            <person name="Rogers J."/>
            <person name="Rutter S."/>
            <person name="Seeger K."/>
            <person name="Skelton S."/>
            <person name="Squares S."/>
            <person name="Squares R."/>
            <person name="Sulston J.E."/>
            <person name="Taylor K."/>
            <person name="Whitehead S."/>
            <person name="Barrell B.G."/>
        </authorList>
    </citation>
    <scope>NUCLEOTIDE SEQUENCE [LARGE SCALE GENOMIC DNA]</scope>
    <source>
        <strain>ATCC 25618 / H37Rv</strain>
    </source>
</reference>
<reference key="2">
    <citation type="journal article" date="2011" name="Mol. Cell. Proteomics">
        <title>Proteogenomic analysis of Mycobacterium tuberculosis by high resolution mass spectrometry.</title>
        <authorList>
            <person name="Kelkar D.S."/>
            <person name="Kumar D."/>
            <person name="Kumar P."/>
            <person name="Balakrishnan L."/>
            <person name="Muthusamy B."/>
            <person name="Yadav A.K."/>
            <person name="Shrivastava P."/>
            <person name="Marimuthu A."/>
            <person name="Anand S."/>
            <person name="Sundaram H."/>
            <person name="Kingsbury R."/>
            <person name="Harsha H.C."/>
            <person name="Nair B."/>
            <person name="Prasad T.S."/>
            <person name="Chauhan D.S."/>
            <person name="Katoch K."/>
            <person name="Katoch V.M."/>
            <person name="Kumar P."/>
            <person name="Chaerkady R."/>
            <person name="Ramachandran S."/>
            <person name="Dash D."/>
            <person name="Pandey A."/>
        </authorList>
    </citation>
    <scope>IDENTIFICATION BY MASS SPECTROMETRY [LARGE SCALE ANALYSIS]</scope>
    <source>
        <strain>ATCC 25618 / H37Rv</strain>
    </source>
</reference>
<name>YBEY_MYCTU</name>
<keyword id="KW-0963">Cytoplasm</keyword>
<keyword id="KW-0255">Endonuclease</keyword>
<keyword id="KW-0378">Hydrolase</keyword>
<keyword id="KW-0479">Metal-binding</keyword>
<keyword id="KW-0540">Nuclease</keyword>
<keyword id="KW-1185">Reference proteome</keyword>
<keyword id="KW-0690">Ribosome biogenesis</keyword>
<keyword id="KW-0698">rRNA processing</keyword>
<keyword id="KW-0862">Zinc</keyword>